<organism>
    <name type="scientific">Shouchella clausii (strain KSM-K16)</name>
    <name type="common">Alkalihalobacillus clausii</name>
    <dbReference type="NCBI Taxonomy" id="66692"/>
    <lineage>
        <taxon>Bacteria</taxon>
        <taxon>Bacillati</taxon>
        <taxon>Bacillota</taxon>
        <taxon>Bacilli</taxon>
        <taxon>Bacillales</taxon>
        <taxon>Bacillaceae</taxon>
        <taxon>Shouchella</taxon>
    </lineage>
</organism>
<feature type="chain" id="PRO_0000271982" description="Bacilliredoxin ABC2448">
    <location>
        <begin position="1"/>
        <end position="142"/>
    </location>
</feature>
<reference key="1">
    <citation type="submission" date="2003-10" db="EMBL/GenBank/DDBJ databases">
        <title>The complete genome sequence of the alkaliphilic Bacillus clausii KSM-K16.</title>
        <authorList>
            <person name="Takaki Y."/>
            <person name="Kageyama Y."/>
            <person name="Shimamura S."/>
            <person name="Suzuki H."/>
            <person name="Nishi S."/>
            <person name="Hatada Y."/>
            <person name="Kawai S."/>
            <person name="Ito S."/>
            <person name="Horikoshi K."/>
        </authorList>
    </citation>
    <scope>NUCLEOTIDE SEQUENCE [LARGE SCALE GENOMIC DNA]</scope>
    <source>
        <strain>KSM-K16</strain>
    </source>
</reference>
<keyword id="KW-1185">Reference proteome</keyword>
<accession>Q5WF77</accession>
<evidence type="ECO:0000305" key="1"/>
<comment type="similarity">
    <text evidence="1">Belongs to the bacilliredoxin family.</text>
</comment>
<name>Y2448_SHOC1</name>
<dbReference type="EMBL" id="AP006627">
    <property type="protein sequence ID" value="BAD64983.1"/>
    <property type="molecule type" value="Genomic_DNA"/>
</dbReference>
<dbReference type="RefSeq" id="WP_011247291.1">
    <property type="nucleotide sequence ID" value="NC_006582.1"/>
</dbReference>
<dbReference type="SMR" id="Q5WF77"/>
<dbReference type="STRING" id="66692.ABC2448"/>
<dbReference type="KEGG" id="bcl:ABC2448"/>
<dbReference type="eggNOG" id="ENOG502ZBVN">
    <property type="taxonomic scope" value="Bacteria"/>
</dbReference>
<dbReference type="HOGENOM" id="CLU_132521_0_0_9"/>
<dbReference type="OrthoDB" id="9793981at2"/>
<dbReference type="Proteomes" id="UP000001168">
    <property type="component" value="Chromosome"/>
</dbReference>
<dbReference type="GO" id="GO:0045454">
    <property type="term" value="P:cell redox homeostasis"/>
    <property type="evidence" value="ECO:0000250"/>
    <property type="project" value="UniProtKB"/>
</dbReference>
<dbReference type="Gene3D" id="3.40.30.10">
    <property type="entry name" value="Glutaredoxin"/>
    <property type="match status" value="1"/>
</dbReference>
<dbReference type="InterPro" id="IPR009474">
    <property type="entry name" value="BrxB/BrxA"/>
</dbReference>
<dbReference type="NCBIfam" id="TIGR04191">
    <property type="entry name" value="YphP_YqiW"/>
    <property type="match status" value="1"/>
</dbReference>
<dbReference type="PANTHER" id="PTHR40052:SF1">
    <property type="entry name" value="BACILLIREDOXIN BRXB"/>
    <property type="match status" value="1"/>
</dbReference>
<dbReference type="PANTHER" id="PTHR40052">
    <property type="entry name" value="UPF0403 PROTEIN YQIW-RELATED"/>
    <property type="match status" value="1"/>
</dbReference>
<dbReference type="Pfam" id="PF06491">
    <property type="entry name" value="Disulph_isomer"/>
    <property type="match status" value="1"/>
</dbReference>
<sequence>MQQFNFFMNDVVQEARNDMVHAGYTELKTAEEVEEVLTQKGTTLVMVNSVCGCAGGIARPAAAYMKNYETQPDRFVTVFAGQDKEATARAREFFTGYGPSSPSFALLKDGQIQTMVERHEIEGHEPIEVVQKLEQAVDTYCK</sequence>
<gene>
    <name type="ordered locus">ABC2448</name>
</gene>
<protein>
    <recommendedName>
        <fullName evidence="1">Bacilliredoxin ABC2448</fullName>
    </recommendedName>
</protein>
<proteinExistence type="inferred from homology"/>